<reference key="1">
    <citation type="submission" date="2008-10" db="EMBL/GenBank/DDBJ databases">
        <title>Genome sequence of Clostridium botulinum A2 Kyoto.</title>
        <authorList>
            <person name="Shrivastava S."/>
            <person name="Brinkac L.M."/>
            <person name="Brown J.L."/>
            <person name="Bruce D."/>
            <person name="Detter C.C."/>
            <person name="Johnson E.A."/>
            <person name="Munk C.A."/>
            <person name="Smith L.A."/>
            <person name="Smith T.J."/>
            <person name="Sutton G."/>
            <person name="Brettin T.S."/>
        </authorList>
    </citation>
    <scope>NUCLEOTIDE SEQUENCE [LARGE SCALE GENOMIC DNA]</scope>
    <source>
        <strain>Kyoto / Type A2</strain>
    </source>
</reference>
<protein>
    <recommendedName>
        <fullName evidence="1">Imidazole glycerol phosphate synthase subunit HisF</fullName>
        <ecNumber evidence="1">4.3.2.10</ecNumber>
    </recommendedName>
    <alternativeName>
        <fullName evidence="1">IGP synthase cyclase subunit</fullName>
    </alternativeName>
    <alternativeName>
        <fullName evidence="1">IGP synthase subunit HisF</fullName>
    </alternativeName>
    <alternativeName>
        <fullName evidence="1">ImGP synthase subunit HisF</fullName>
        <shortName evidence="1">IGPS subunit HisF</shortName>
    </alternativeName>
</protein>
<accession>C1FN42</accession>
<comment type="function">
    <text evidence="1">IGPS catalyzes the conversion of PRFAR and glutamine to IGP, AICAR and glutamate. The HisF subunit catalyzes the cyclization activity that produces IGP and AICAR from PRFAR using the ammonia provided by the HisH subunit.</text>
</comment>
<comment type="catalytic activity">
    <reaction evidence="1">
        <text>5-[(5-phospho-1-deoxy-D-ribulos-1-ylimino)methylamino]-1-(5-phospho-beta-D-ribosyl)imidazole-4-carboxamide + L-glutamine = D-erythro-1-(imidazol-4-yl)glycerol 3-phosphate + 5-amino-1-(5-phospho-beta-D-ribosyl)imidazole-4-carboxamide + L-glutamate + H(+)</text>
        <dbReference type="Rhea" id="RHEA:24793"/>
        <dbReference type="ChEBI" id="CHEBI:15378"/>
        <dbReference type="ChEBI" id="CHEBI:29985"/>
        <dbReference type="ChEBI" id="CHEBI:58278"/>
        <dbReference type="ChEBI" id="CHEBI:58359"/>
        <dbReference type="ChEBI" id="CHEBI:58475"/>
        <dbReference type="ChEBI" id="CHEBI:58525"/>
        <dbReference type="EC" id="4.3.2.10"/>
    </reaction>
</comment>
<comment type="pathway">
    <text evidence="1">Amino-acid biosynthesis; L-histidine biosynthesis; L-histidine from 5-phospho-alpha-D-ribose 1-diphosphate: step 5/9.</text>
</comment>
<comment type="subunit">
    <text evidence="1">Heterodimer of HisH and HisF.</text>
</comment>
<comment type="subcellular location">
    <subcellularLocation>
        <location evidence="1">Cytoplasm</location>
    </subcellularLocation>
</comment>
<comment type="similarity">
    <text evidence="1">Belongs to the HisA/HisF family.</text>
</comment>
<name>HIS6_CLOBJ</name>
<dbReference type="EC" id="4.3.2.10" evidence="1"/>
<dbReference type="EMBL" id="CP001581">
    <property type="protein sequence ID" value="ACO84071.1"/>
    <property type="molecule type" value="Genomic_DNA"/>
</dbReference>
<dbReference type="RefSeq" id="WP_012704024.1">
    <property type="nucleotide sequence ID" value="NC_012563.1"/>
</dbReference>
<dbReference type="SMR" id="C1FN42"/>
<dbReference type="KEGG" id="cby:CLM_1813"/>
<dbReference type="eggNOG" id="COG0107">
    <property type="taxonomic scope" value="Bacteria"/>
</dbReference>
<dbReference type="HOGENOM" id="CLU_048577_4_0_9"/>
<dbReference type="UniPathway" id="UPA00031">
    <property type="reaction ID" value="UER00010"/>
</dbReference>
<dbReference type="Proteomes" id="UP000001374">
    <property type="component" value="Chromosome"/>
</dbReference>
<dbReference type="GO" id="GO:0005737">
    <property type="term" value="C:cytoplasm"/>
    <property type="evidence" value="ECO:0007669"/>
    <property type="project" value="UniProtKB-SubCell"/>
</dbReference>
<dbReference type="GO" id="GO:0000107">
    <property type="term" value="F:imidazoleglycerol-phosphate synthase activity"/>
    <property type="evidence" value="ECO:0007669"/>
    <property type="project" value="UniProtKB-UniRule"/>
</dbReference>
<dbReference type="GO" id="GO:0016829">
    <property type="term" value="F:lyase activity"/>
    <property type="evidence" value="ECO:0007669"/>
    <property type="project" value="UniProtKB-KW"/>
</dbReference>
<dbReference type="GO" id="GO:0000105">
    <property type="term" value="P:L-histidine biosynthetic process"/>
    <property type="evidence" value="ECO:0007669"/>
    <property type="project" value="UniProtKB-UniRule"/>
</dbReference>
<dbReference type="CDD" id="cd04731">
    <property type="entry name" value="HisF"/>
    <property type="match status" value="1"/>
</dbReference>
<dbReference type="FunFam" id="3.20.20.70:FF:000006">
    <property type="entry name" value="Imidazole glycerol phosphate synthase subunit HisF"/>
    <property type="match status" value="1"/>
</dbReference>
<dbReference type="Gene3D" id="3.20.20.70">
    <property type="entry name" value="Aldolase class I"/>
    <property type="match status" value="1"/>
</dbReference>
<dbReference type="HAMAP" id="MF_01013">
    <property type="entry name" value="HisF"/>
    <property type="match status" value="1"/>
</dbReference>
<dbReference type="InterPro" id="IPR013785">
    <property type="entry name" value="Aldolase_TIM"/>
</dbReference>
<dbReference type="InterPro" id="IPR006062">
    <property type="entry name" value="His_biosynth"/>
</dbReference>
<dbReference type="InterPro" id="IPR004651">
    <property type="entry name" value="HisF"/>
</dbReference>
<dbReference type="InterPro" id="IPR050064">
    <property type="entry name" value="IGPS_HisA/HisF"/>
</dbReference>
<dbReference type="InterPro" id="IPR011060">
    <property type="entry name" value="RibuloseP-bd_barrel"/>
</dbReference>
<dbReference type="NCBIfam" id="TIGR00735">
    <property type="entry name" value="hisF"/>
    <property type="match status" value="1"/>
</dbReference>
<dbReference type="PANTHER" id="PTHR21235:SF2">
    <property type="entry name" value="IMIDAZOLE GLYCEROL PHOSPHATE SYNTHASE HISHF"/>
    <property type="match status" value="1"/>
</dbReference>
<dbReference type="PANTHER" id="PTHR21235">
    <property type="entry name" value="IMIDAZOLE GLYCEROL PHOSPHATE SYNTHASE SUBUNIT HISF/H IGP SYNTHASE SUBUNIT HISF/H"/>
    <property type="match status" value="1"/>
</dbReference>
<dbReference type="Pfam" id="PF00977">
    <property type="entry name" value="His_biosynth"/>
    <property type="match status" value="1"/>
</dbReference>
<dbReference type="SUPFAM" id="SSF51366">
    <property type="entry name" value="Ribulose-phoshate binding barrel"/>
    <property type="match status" value="1"/>
</dbReference>
<evidence type="ECO:0000255" key="1">
    <source>
        <dbReference type="HAMAP-Rule" id="MF_01013"/>
    </source>
</evidence>
<gene>
    <name evidence="1" type="primary">hisF</name>
    <name type="ordered locus">CLM_1813</name>
</gene>
<organism>
    <name type="scientific">Clostridium botulinum (strain Kyoto / Type A2)</name>
    <dbReference type="NCBI Taxonomy" id="536232"/>
    <lineage>
        <taxon>Bacteria</taxon>
        <taxon>Bacillati</taxon>
        <taxon>Bacillota</taxon>
        <taxon>Clostridia</taxon>
        <taxon>Eubacteriales</taxon>
        <taxon>Clostridiaceae</taxon>
        <taxon>Clostridium</taxon>
    </lineage>
</organism>
<proteinExistence type="inferred from homology"/>
<feature type="chain" id="PRO_1000148913" description="Imidazole glycerol phosphate synthase subunit HisF">
    <location>
        <begin position="1"/>
        <end position="253"/>
    </location>
</feature>
<feature type="active site" evidence="1">
    <location>
        <position position="11"/>
    </location>
</feature>
<feature type="active site" evidence="1">
    <location>
        <position position="130"/>
    </location>
</feature>
<keyword id="KW-0028">Amino-acid biosynthesis</keyword>
<keyword id="KW-0963">Cytoplasm</keyword>
<keyword id="KW-0368">Histidine biosynthesis</keyword>
<keyword id="KW-0456">Lyase</keyword>
<sequence>MITKRIIPCLDVDMGRVVKGVNFVNLKDVGDPVEIAEFYNKEGADEIVFLDISATHEGRATMIDVVRKTAEKLFIPLTVGGGIKNINDFRDILRAGADKISVNSSAIRNPKLIKKAAECFGSQCVVVAIDGKKRKDKDGWNVFINGGRIDTGIDAIEWARKVEKLGAGEILLTSMDADGTKEGYDLEFTNEVSKAVNIPVIASGGCGKLKHFGEIFEKSSADAALAASLFHFKELSIKEVKNYLKKEGFSVRL</sequence>